<protein>
    <recommendedName>
        <fullName evidence="1">Gamma-glutamyl phosphate reductase</fullName>
        <shortName evidence="1">GPR</shortName>
        <ecNumber evidence="1">1.2.1.41</ecNumber>
    </recommendedName>
    <alternativeName>
        <fullName evidence="1">Glutamate-5-semialdehyde dehydrogenase</fullName>
    </alternativeName>
    <alternativeName>
        <fullName evidence="1">Glutamyl-gamma-semialdehyde dehydrogenase</fullName>
        <shortName evidence="1">GSA dehydrogenase</shortName>
    </alternativeName>
</protein>
<keyword id="KW-0028">Amino-acid biosynthesis</keyword>
<keyword id="KW-0963">Cytoplasm</keyword>
<keyword id="KW-0521">NADP</keyword>
<keyword id="KW-0560">Oxidoreductase</keyword>
<keyword id="KW-0641">Proline biosynthesis</keyword>
<keyword id="KW-1185">Reference proteome</keyword>
<feature type="chain" id="PRO_0000189812" description="Gamma-glutamyl phosphate reductase">
    <location>
        <begin position="1"/>
        <end position="411"/>
    </location>
</feature>
<comment type="function">
    <text evidence="1">Catalyzes the NADPH-dependent reduction of L-glutamate 5-phosphate into L-glutamate 5-semialdehyde and phosphate. The product spontaneously undergoes cyclization to form 1-pyrroline-5-carboxylate.</text>
</comment>
<comment type="catalytic activity">
    <reaction evidence="1">
        <text>L-glutamate 5-semialdehyde + phosphate + NADP(+) = L-glutamyl 5-phosphate + NADPH + H(+)</text>
        <dbReference type="Rhea" id="RHEA:19541"/>
        <dbReference type="ChEBI" id="CHEBI:15378"/>
        <dbReference type="ChEBI" id="CHEBI:43474"/>
        <dbReference type="ChEBI" id="CHEBI:57783"/>
        <dbReference type="ChEBI" id="CHEBI:58066"/>
        <dbReference type="ChEBI" id="CHEBI:58274"/>
        <dbReference type="ChEBI" id="CHEBI:58349"/>
        <dbReference type="EC" id="1.2.1.41"/>
    </reaction>
</comment>
<comment type="pathway">
    <text evidence="1">Amino-acid biosynthesis; L-proline biosynthesis; L-glutamate 5-semialdehyde from L-glutamate: step 2/2.</text>
</comment>
<comment type="subcellular location">
    <subcellularLocation>
        <location evidence="1">Cytoplasm</location>
    </subcellularLocation>
</comment>
<comment type="similarity">
    <text evidence="1">Belongs to the gamma-glutamyl phosphate reductase family.</text>
</comment>
<evidence type="ECO:0000255" key="1">
    <source>
        <dbReference type="HAMAP-Rule" id="MF_00412"/>
    </source>
</evidence>
<sequence length="411" mass="44972">MEAFLQKAKQASRAIATLLPQRRNEILRAMAGAIRESQEMILNVNALDLKEAQASGLKGSMLERLALDGPKIAGMARAIEEIAMLRNPLGRIVDGWVVENGLRIEKVSTPIGVVGIIYESRPNVTSDTAALCFKSGNVCVLKGGKEAKRSNEAIASVMQAVLKANNLPIEAISLLPDASREGVAKLVKMDQYVDLIVPRGGNALISFVSENATIPVIKHDKGLCHLYIHEEADFAKALPIVINAKTQRPSVCNAIETLLVDETIHERFLLELRPLLEEKGTEIRGCEKSLKILGGKRASEEDFHTEYGENILNVRVVKGFEEALEHIAIYGSQHSESIITQNHSIAERFLEEVDASSVYVNASTRFTDGGEFGFGAEVGISTSKLHARGPMGINELTTYKFKIYGEGQIRK</sequence>
<accession>Q7M8Z4</accession>
<reference key="1">
    <citation type="journal article" date="2003" name="Proc. Natl. Acad. Sci. U.S.A.">
        <title>Complete genome sequence and analysis of Wolinella succinogenes.</title>
        <authorList>
            <person name="Baar C."/>
            <person name="Eppinger M."/>
            <person name="Raddatz G."/>
            <person name="Simon J."/>
            <person name="Lanz C."/>
            <person name="Klimmek O."/>
            <person name="Nandakumar R."/>
            <person name="Gross R."/>
            <person name="Rosinus A."/>
            <person name="Keller H."/>
            <person name="Jagtap P."/>
            <person name="Linke B."/>
            <person name="Meyer F."/>
            <person name="Lederer H."/>
            <person name="Schuster S.C."/>
        </authorList>
    </citation>
    <scope>NUCLEOTIDE SEQUENCE [LARGE SCALE GENOMIC DNA]</scope>
    <source>
        <strain>ATCC 29543 / DSM 1740 / CCUG 13145 / JCM 31913 / LMG 7466 / NCTC 11488 / FDC 602W</strain>
    </source>
</reference>
<proteinExistence type="inferred from homology"/>
<dbReference type="EC" id="1.2.1.41" evidence="1"/>
<dbReference type="EMBL" id="BX571660">
    <property type="protein sequence ID" value="CAE10377.1"/>
    <property type="molecule type" value="Genomic_DNA"/>
</dbReference>
<dbReference type="RefSeq" id="WP_011139163.1">
    <property type="nucleotide sequence ID" value="NC_005090.1"/>
</dbReference>
<dbReference type="SMR" id="Q7M8Z4"/>
<dbReference type="STRING" id="273121.WS1300"/>
<dbReference type="KEGG" id="wsu:WS1300"/>
<dbReference type="eggNOG" id="COG0014">
    <property type="taxonomic scope" value="Bacteria"/>
</dbReference>
<dbReference type="HOGENOM" id="CLU_030231_0_0_7"/>
<dbReference type="UniPathway" id="UPA00098">
    <property type="reaction ID" value="UER00360"/>
</dbReference>
<dbReference type="Proteomes" id="UP000000422">
    <property type="component" value="Chromosome"/>
</dbReference>
<dbReference type="GO" id="GO:0005737">
    <property type="term" value="C:cytoplasm"/>
    <property type="evidence" value="ECO:0007669"/>
    <property type="project" value="UniProtKB-SubCell"/>
</dbReference>
<dbReference type="GO" id="GO:0004350">
    <property type="term" value="F:glutamate-5-semialdehyde dehydrogenase activity"/>
    <property type="evidence" value="ECO:0007669"/>
    <property type="project" value="UniProtKB-UniRule"/>
</dbReference>
<dbReference type="GO" id="GO:0050661">
    <property type="term" value="F:NADP binding"/>
    <property type="evidence" value="ECO:0007669"/>
    <property type="project" value="InterPro"/>
</dbReference>
<dbReference type="GO" id="GO:0055129">
    <property type="term" value="P:L-proline biosynthetic process"/>
    <property type="evidence" value="ECO:0007669"/>
    <property type="project" value="UniProtKB-UniRule"/>
</dbReference>
<dbReference type="CDD" id="cd07079">
    <property type="entry name" value="ALDH_F18-19_ProA-GPR"/>
    <property type="match status" value="1"/>
</dbReference>
<dbReference type="FunFam" id="3.40.309.10:FF:000006">
    <property type="entry name" value="Gamma-glutamyl phosphate reductase"/>
    <property type="match status" value="1"/>
</dbReference>
<dbReference type="Gene3D" id="3.40.605.10">
    <property type="entry name" value="Aldehyde Dehydrogenase, Chain A, domain 1"/>
    <property type="match status" value="1"/>
</dbReference>
<dbReference type="Gene3D" id="3.40.309.10">
    <property type="entry name" value="Aldehyde Dehydrogenase, Chain A, domain 2"/>
    <property type="match status" value="1"/>
</dbReference>
<dbReference type="HAMAP" id="MF_00412">
    <property type="entry name" value="ProA"/>
    <property type="match status" value="1"/>
</dbReference>
<dbReference type="InterPro" id="IPR016161">
    <property type="entry name" value="Ald_DH/histidinol_DH"/>
</dbReference>
<dbReference type="InterPro" id="IPR016163">
    <property type="entry name" value="Ald_DH_C"/>
</dbReference>
<dbReference type="InterPro" id="IPR016162">
    <property type="entry name" value="Ald_DH_N"/>
</dbReference>
<dbReference type="InterPro" id="IPR015590">
    <property type="entry name" value="Aldehyde_DH_dom"/>
</dbReference>
<dbReference type="InterPro" id="IPR020593">
    <property type="entry name" value="G-glutamylP_reductase_CS"/>
</dbReference>
<dbReference type="InterPro" id="IPR012134">
    <property type="entry name" value="Glu-5-SA_DH"/>
</dbReference>
<dbReference type="InterPro" id="IPR000965">
    <property type="entry name" value="GPR_dom"/>
</dbReference>
<dbReference type="NCBIfam" id="NF001221">
    <property type="entry name" value="PRK00197.1"/>
    <property type="match status" value="1"/>
</dbReference>
<dbReference type="NCBIfam" id="TIGR00407">
    <property type="entry name" value="proA"/>
    <property type="match status" value="1"/>
</dbReference>
<dbReference type="PANTHER" id="PTHR11063:SF8">
    <property type="entry name" value="DELTA-1-PYRROLINE-5-CARBOXYLATE SYNTHASE"/>
    <property type="match status" value="1"/>
</dbReference>
<dbReference type="PANTHER" id="PTHR11063">
    <property type="entry name" value="GLUTAMATE SEMIALDEHYDE DEHYDROGENASE"/>
    <property type="match status" value="1"/>
</dbReference>
<dbReference type="Pfam" id="PF00171">
    <property type="entry name" value="Aldedh"/>
    <property type="match status" value="1"/>
</dbReference>
<dbReference type="PIRSF" id="PIRSF000151">
    <property type="entry name" value="GPR"/>
    <property type="match status" value="1"/>
</dbReference>
<dbReference type="SUPFAM" id="SSF53720">
    <property type="entry name" value="ALDH-like"/>
    <property type="match status" value="1"/>
</dbReference>
<dbReference type="PROSITE" id="PS01223">
    <property type="entry name" value="PROA"/>
    <property type="match status" value="1"/>
</dbReference>
<gene>
    <name evidence="1" type="primary">proA</name>
    <name type="ordered locus">WS1300</name>
</gene>
<organism>
    <name type="scientific">Wolinella succinogenes (strain ATCC 29543 / DSM 1740 / CCUG 13145 / JCM 31913 / LMG 7466 / NCTC 11488 / FDC 602W)</name>
    <name type="common">Vibrio succinogenes</name>
    <dbReference type="NCBI Taxonomy" id="273121"/>
    <lineage>
        <taxon>Bacteria</taxon>
        <taxon>Pseudomonadati</taxon>
        <taxon>Campylobacterota</taxon>
        <taxon>Epsilonproteobacteria</taxon>
        <taxon>Campylobacterales</taxon>
        <taxon>Helicobacteraceae</taxon>
        <taxon>Wolinella</taxon>
    </lineage>
</organism>
<name>PROA_WOLSU</name>